<protein>
    <recommendedName>
        <fullName>Putative metal-binding protein TP_0034</fullName>
    </recommendedName>
</protein>
<evidence type="ECO:0000250" key="1">
    <source>
        <dbReference type="UniProtKB" id="A1B9L0"/>
    </source>
</evidence>
<evidence type="ECO:0000250" key="2">
    <source>
        <dbReference type="UniProtKB" id="P96116"/>
    </source>
</evidence>
<evidence type="ECO:0000255" key="3">
    <source>
        <dbReference type="PROSITE-ProRule" id="PRU00303"/>
    </source>
</evidence>
<evidence type="ECO:0000305" key="4"/>
<proteinExistence type="inferred from homology"/>
<dbReference type="EMBL" id="AE000520">
    <property type="protein sequence ID" value="AAC65029.1"/>
    <property type="molecule type" value="Genomic_DNA"/>
</dbReference>
<dbReference type="PIR" id="D71375">
    <property type="entry name" value="D71375"/>
</dbReference>
<dbReference type="SMR" id="O83077"/>
<dbReference type="IntAct" id="O83077">
    <property type="interactions" value="4"/>
</dbReference>
<dbReference type="STRING" id="243276.TP_0034"/>
<dbReference type="EnsemblBacteria" id="AAC65029">
    <property type="protein sequence ID" value="AAC65029"/>
    <property type="gene ID" value="TP_0034"/>
</dbReference>
<dbReference type="KEGG" id="tpa:TP_0034"/>
<dbReference type="KEGG" id="tpw:TPANIC_0034"/>
<dbReference type="eggNOG" id="COG0803">
    <property type="taxonomic scope" value="Bacteria"/>
</dbReference>
<dbReference type="HOGENOM" id="CLU_016838_1_0_12"/>
<dbReference type="Proteomes" id="UP000000811">
    <property type="component" value="Chromosome"/>
</dbReference>
<dbReference type="GO" id="GO:0042597">
    <property type="term" value="C:periplasmic space"/>
    <property type="evidence" value="ECO:0007669"/>
    <property type="project" value="UniProtKB-SubCell"/>
</dbReference>
<dbReference type="GO" id="GO:0046872">
    <property type="term" value="F:metal ion binding"/>
    <property type="evidence" value="ECO:0007669"/>
    <property type="project" value="UniProtKB-KW"/>
</dbReference>
<dbReference type="GO" id="GO:0007155">
    <property type="term" value="P:cell adhesion"/>
    <property type="evidence" value="ECO:0007669"/>
    <property type="project" value="InterPro"/>
</dbReference>
<dbReference type="GO" id="GO:0030001">
    <property type="term" value="P:metal ion transport"/>
    <property type="evidence" value="ECO:0007669"/>
    <property type="project" value="InterPro"/>
</dbReference>
<dbReference type="CDD" id="cd01017">
    <property type="entry name" value="AdcA"/>
    <property type="match status" value="1"/>
</dbReference>
<dbReference type="Gene3D" id="3.40.50.1980">
    <property type="entry name" value="Nitrogenase molybdenum iron protein domain"/>
    <property type="match status" value="2"/>
</dbReference>
<dbReference type="InterPro" id="IPR006129">
    <property type="entry name" value="AdhesinB"/>
</dbReference>
<dbReference type="InterPro" id="IPR050492">
    <property type="entry name" value="Bact_metal-bind_prot9"/>
</dbReference>
<dbReference type="InterPro" id="IPR006128">
    <property type="entry name" value="Lipoprotein_PsaA-like"/>
</dbReference>
<dbReference type="InterPro" id="IPR006127">
    <property type="entry name" value="ZnuA-like"/>
</dbReference>
<dbReference type="PANTHER" id="PTHR42953:SF3">
    <property type="entry name" value="HIGH-AFFINITY ZINC UPTAKE SYSTEM PROTEIN ZNUA"/>
    <property type="match status" value="1"/>
</dbReference>
<dbReference type="PANTHER" id="PTHR42953">
    <property type="entry name" value="HIGH-AFFINITY ZINC UPTAKE SYSTEM PROTEIN ZNUA-RELATED"/>
    <property type="match status" value="1"/>
</dbReference>
<dbReference type="Pfam" id="PF01297">
    <property type="entry name" value="ZnuA"/>
    <property type="match status" value="1"/>
</dbReference>
<dbReference type="PRINTS" id="PR00691">
    <property type="entry name" value="ADHESINB"/>
</dbReference>
<dbReference type="PRINTS" id="PR00690">
    <property type="entry name" value="ADHESNFAMILY"/>
</dbReference>
<dbReference type="SUPFAM" id="SSF53807">
    <property type="entry name" value="Helical backbone' metal receptor"/>
    <property type="match status" value="1"/>
</dbReference>
<dbReference type="PROSITE" id="PS51257">
    <property type="entry name" value="PROKAR_LIPOPROTEIN"/>
    <property type="match status" value="1"/>
</dbReference>
<accession>O83077</accession>
<keyword id="KW-0479">Metal-binding</keyword>
<keyword id="KW-0574">Periplasm</keyword>
<keyword id="KW-1185">Reference proteome</keyword>
<keyword id="KW-0732">Signal</keyword>
<keyword id="KW-0813">Transport</keyword>
<reference key="1">
    <citation type="journal article" date="1998" name="Science">
        <title>Complete genome sequence of Treponema pallidum, the syphilis spirochete.</title>
        <authorList>
            <person name="Fraser C.M."/>
            <person name="Norris S.J."/>
            <person name="Weinstock G.M."/>
            <person name="White O."/>
            <person name="Sutton G.G."/>
            <person name="Dodson R.J."/>
            <person name="Gwinn M.L."/>
            <person name="Hickey E.K."/>
            <person name="Clayton R.A."/>
            <person name="Ketchum K.A."/>
            <person name="Sodergren E."/>
            <person name="Hardham J.M."/>
            <person name="McLeod M.P."/>
            <person name="Salzberg S.L."/>
            <person name="Peterson J.D."/>
            <person name="Khalak H.G."/>
            <person name="Richardson D.L."/>
            <person name="Howell J.K."/>
            <person name="Chidambaram M."/>
            <person name="Utterback T.R."/>
            <person name="McDonald L.A."/>
            <person name="Artiach P."/>
            <person name="Bowman C."/>
            <person name="Cotton M.D."/>
            <person name="Fujii C."/>
            <person name="Garland S.A."/>
            <person name="Hatch B."/>
            <person name="Horst K."/>
            <person name="Roberts K.M."/>
            <person name="Sandusky M."/>
            <person name="Weidman J.F."/>
            <person name="Smith H.O."/>
            <person name="Venter J.C."/>
        </authorList>
    </citation>
    <scope>NUCLEOTIDE SEQUENCE [LARGE SCALE GENOMIC DNA]</scope>
    <source>
        <strain>Nichols</strain>
    </source>
</reference>
<feature type="signal peptide" evidence="3">
    <location>
        <begin position="1"/>
        <end position="19"/>
    </location>
</feature>
<feature type="chain" id="PRO_0000031907" description="Putative metal-binding protein TP_0034">
    <location>
        <begin position="20"/>
        <end position="316"/>
    </location>
</feature>
<feature type="binding site" evidence="2">
    <location>
        <position position="68"/>
    </location>
    <ligand>
        <name>a divalent metal cation</name>
        <dbReference type="ChEBI" id="CHEBI:60240"/>
    </ligand>
</feature>
<feature type="binding site" evidence="2">
    <location>
        <position position="146"/>
    </location>
    <ligand>
        <name>a divalent metal cation</name>
        <dbReference type="ChEBI" id="CHEBI:60240"/>
    </ligand>
</feature>
<feature type="binding site" evidence="2">
    <location>
        <position position="210"/>
    </location>
    <ligand>
        <name>a divalent metal cation</name>
        <dbReference type="ChEBI" id="CHEBI:60240"/>
    </ligand>
</feature>
<comment type="function">
    <text evidence="2">Part of an ATP-binding cassette (ABC) transport system involved in metal import (By similarity). Binds a metal with high affinity and specificity and delivers it to the membrane permease for translocation into the cytoplasm (By similarity).</text>
</comment>
<comment type="subcellular location">
    <subcellularLocation>
        <location evidence="1">Periplasm</location>
    </subcellularLocation>
</comment>
<comment type="similarity">
    <text evidence="4">Belongs to the bacterial solute-binding protein 9 family.</text>
</comment>
<sequence length="316" mass="35434">MQRCSVVAALAGVVFLAQACSLSTPSRITHTDKLPVVVTFNALKELTQMVGGEKIHLVSIVPDGVDSHDFEPKAKHMAFISDAKVIVYNGLGMEPWIHSVLHAARNSGSIRVEAAQGIVPLKAHTRGHTAHHVHAHASHGSAYDPHVWLSVCNAQTMLRTIGKALCKADPQHTRFYKRNARNAAARLEALYKEYRSKFAALSHRYFVTTHAAFGYLCRDFDLQQKSIKDVFNTEEPSIKRLVELVEFSKKHSVRTIFSERGPSEKVARVLAQEIGASVETIYTMEKNEENLSYYERMKHNINRIYRACSKQVTPSQ</sequence>
<name>Y034_TREPA</name>
<organism>
    <name type="scientific">Treponema pallidum (strain Nichols)</name>
    <dbReference type="NCBI Taxonomy" id="243276"/>
    <lineage>
        <taxon>Bacteria</taxon>
        <taxon>Pseudomonadati</taxon>
        <taxon>Spirochaetota</taxon>
        <taxon>Spirochaetia</taxon>
        <taxon>Spirochaetales</taxon>
        <taxon>Treponemataceae</taxon>
        <taxon>Treponema</taxon>
    </lineage>
</organism>
<gene>
    <name type="ordered locus">TP_0034</name>
</gene>